<accession>P36832</accession>
<protein>
    <recommendedName>
        <fullName evidence="1">Protein E7</fullName>
    </recommendedName>
</protein>
<sequence>MHGNVPTLPQYIIELIPQTEIDLQCHEQLNSSEDEDEDEVDHLQEQPQQARRDEQHPCYLIETQCCRCESLVQLAVQSSTKELRILQQMLMGTVELVCPLCATRR</sequence>
<evidence type="ECO:0000255" key="1">
    <source>
        <dbReference type="HAMAP-Rule" id="MF_04004"/>
    </source>
</evidence>
<evidence type="ECO:0000256" key="2">
    <source>
        <dbReference type="SAM" id="MobiDB-lite"/>
    </source>
</evidence>
<feature type="chain" id="PRO_0000133449" description="Protein E7">
    <location>
        <begin position="1"/>
        <end position="105"/>
    </location>
</feature>
<feature type="zinc finger region" evidence="1">
    <location>
        <begin position="65"/>
        <end position="101"/>
    </location>
</feature>
<feature type="region of interest" description="E7 terminal domain" evidence="1">
    <location>
        <begin position="1"/>
        <end position="45"/>
    </location>
</feature>
<feature type="region of interest" description="Disordered" evidence="2">
    <location>
        <begin position="30"/>
        <end position="53"/>
    </location>
</feature>
<feature type="short sequence motif" description="LXCXE motif; interaction with host RB1 and TMEM173/STING" evidence="1">
    <location>
        <begin position="23"/>
        <end position="27"/>
    </location>
</feature>
<feature type="short sequence motif" description="Nuclear export signal" evidence="1">
    <location>
        <begin position="83"/>
        <end position="91"/>
    </location>
</feature>
<name>VE7_HPV53</name>
<reference key="1">
    <citation type="journal article" date="1994" name="Curr. Top. Microbiol. Immunol.">
        <title>Primer-directed sequencing of human papillomavirus types.</title>
        <authorList>
            <person name="Delius H."/>
            <person name="Hofmann B."/>
        </authorList>
    </citation>
    <scope>NUCLEOTIDE SEQUENCE [GENOMIC DNA]</scope>
</reference>
<reference key="2">
    <citation type="journal article" date="2002" name="Rev. Med. Virol.">
        <title>Interactions of SV40 large T antigen and other viral proteins with retinoblastoma tumour suppressor.</title>
        <authorList>
            <person name="Lee C."/>
            <person name="Cho Y."/>
        </authorList>
    </citation>
    <scope>REVIEW</scope>
</reference>
<proteinExistence type="inferred from homology"/>
<organism>
    <name type="scientific">Human papillomavirus type 53</name>
    <dbReference type="NCBI Taxonomy" id="333765"/>
    <lineage>
        <taxon>Viruses</taxon>
        <taxon>Monodnaviria</taxon>
        <taxon>Shotokuvirae</taxon>
        <taxon>Cossaviricota</taxon>
        <taxon>Papovaviricetes</taxon>
        <taxon>Zurhausenvirales</taxon>
        <taxon>Papillomaviridae</taxon>
        <taxon>Firstpapillomavirinae</taxon>
        <taxon>Alphapapillomavirus</taxon>
        <taxon>Alphapapillomavirus 6</taxon>
    </lineage>
</organism>
<comment type="function">
    <text evidence="1">Plays a role in viral genome replication by driving entry of quiescent cells into the cell cycle. Stimulation of progression from G1 to S phase allows the virus to efficiently use the cellular DNA replicating machinery to achieve viral genome replication. E7 protein has both transforming and trans-activating activities. Induces the disassembly of the E2F1 transcription factor from RB1, with subsequent transcriptional activation of E2F1-regulated S-phase genes. Interferes with host histone deacetylation mediated by HDAC1 and HDAC2, leading to transcription activation. Also plays a role in the inhibition of both antiviral and antiproliferative functions of host interferon alpha. Interaction with host TMEM173/STING impairs the ability of TMEM173/STING to sense cytosolic DNA and promote the production of type I interferon (IFN-alpha and IFN-beta).</text>
</comment>
<comment type="subunit">
    <text evidence="1">Homodimer. Homooligomer. Interacts with host RB1; this interaction induces dissociation of RB1-E2F1 complex thereby disrupting RB1 activity. Interacts with host EP300; this interaction represses EP300 transcriptional activity. Interacts with protein E2; this interaction inhibits E7 oncogenic activity. Interacts with host TMEM173/STING; this interaction impairs the ability of TMEM173/STING to sense cytosolic DNA and promote the production of type I interferon (IFN-alpha and IFN-beta).</text>
</comment>
<comment type="subcellular location">
    <subcellularLocation>
        <location evidence="1">Host cytoplasm</location>
    </subcellularLocation>
    <subcellularLocation>
        <location evidence="1">Host nucleus</location>
    </subcellularLocation>
    <text evidence="1">Predominantly found in the host nucleus.</text>
</comment>
<comment type="domain">
    <text evidence="1">The E7 terminal domain is an intrinsically disordered domain, whose flexibility and conformational transitions confer target adaptability to the oncoprotein. It allows adaptation to a variety of protein targets and exposes the PEST degradation sequence that regulates its turnover in the cell.</text>
</comment>
<comment type="PTM">
    <text evidence="1">Highly phosphorylated.</text>
</comment>
<comment type="similarity">
    <text evidence="1">Belongs to the papillomaviridae E7 protein family.</text>
</comment>
<organismHost>
    <name type="scientific">Homo sapiens</name>
    <name type="common">Human</name>
    <dbReference type="NCBI Taxonomy" id="9606"/>
</organismHost>
<gene>
    <name evidence="1" type="primary">E7</name>
</gene>
<keyword id="KW-0010">Activator</keyword>
<keyword id="KW-0238">DNA-binding</keyword>
<keyword id="KW-0244">Early protein</keyword>
<keyword id="KW-1078">G1/S host cell cycle checkpoint dysregulation by virus</keyword>
<keyword id="KW-1035">Host cytoplasm</keyword>
<keyword id="KW-1048">Host nucleus</keyword>
<keyword id="KW-0945">Host-virus interaction</keyword>
<keyword id="KW-1090">Inhibition of host innate immune response by virus</keyword>
<keyword id="KW-1114">Inhibition of host interferon signaling pathway by virus</keyword>
<keyword id="KW-0922">Interferon antiviral system evasion</keyword>
<keyword id="KW-0479">Metal-binding</keyword>
<keyword id="KW-1121">Modulation of host cell cycle by virus</keyword>
<keyword id="KW-0553">Oncogene</keyword>
<keyword id="KW-0804">Transcription</keyword>
<keyword id="KW-0805">Transcription regulation</keyword>
<keyword id="KW-0899">Viral immunoevasion</keyword>
<keyword id="KW-0862">Zinc</keyword>
<keyword id="KW-0863">Zinc-finger</keyword>
<dbReference type="EMBL" id="X74482">
    <property type="protein sequence ID" value="CAA52592.1"/>
    <property type="molecule type" value="Genomic_DNA"/>
</dbReference>
<dbReference type="PIR" id="S36528">
    <property type="entry name" value="S36528"/>
</dbReference>
<dbReference type="RefSeq" id="NP_041845.1">
    <property type="nucleotide sequence ID" value="NC_001593.1"/>
</dbReference>
<dbReference type="SMR" id="P36832"/>
<dbReference type="GeneID" id="1489465"/>
<dbReference type="KEGG" id="vg:1489465"/>
<dbReference type="OrthoDB" id="28045at10239"/>
<dbReference type="Proteomes" id="UP000009126">
    <property type="component" value="Genome"/>
</dbReference>
<dbReference type="GO" id="GO:0030430">
    <property type="term" value="C:host cell cytoplasm"/>
    <property type="evidence" value="ECO:0007669"/>
    <property type="project" value="UniProtKB-SubCell"/>
</dbReference>
<dbReference type="GO" id="GO:0042025">
    <property type="term" value="C:host cell nucleus"/>
    <property type="evidence" value="ECO:0007669"/>
    <property type="project" value="UniProtKB-SubCell"/>
</dbReference>
<dbReference type="GO" id="GO:0003677">
    <property type="term" value="F:DNA binding"/>
    <property type="evidence" value="ECO:0007669"/>
    <property type="project" value="UniProtKB-UniRule"/>
</dbReference>
<dbReference type="GO" id="GO:0003700">
    <property type="term" value="F:DNA-binding transcription factor activity"/>
    <property type="evidence" value="ECO:0007669"/>
    <property type="project" value="UniProtKB-UniRule"/>
</dbReference>
<dbReference type="GO" id="GO:0019904">
    <property type="term" value="F:protein domain specific binding"/>
    <property type="evidence" value="ECO:0007669"/>
    <property type="project" value="UniProtKB-UniRule"/>
</dbReference>
<dbReference type="GO" id="GO:0008270">
    <property type="term" value="F:zinc ion binding"/>
    <property type="evidence" value="ECO:0007669"/>
    <property type="project" value="UniProtKB-KW"/>
</dbReference>
<dbReference type="GO" id="GO:0006351">
    <property type="term" value="P:DNA-templated transcription"/>
    <property type="evidence" value="ECO:0007669"/>
    <property type="project" value="UniProtKB-UniRule"/>
</dbReference>
<dbReference type="GO" id="GO:0039645">
    <property type="term" value="P:symbiont-mediated perturbation of host cell cycle G1/S transition checkpoint"/>
    <property type="evidence" value="ECO:0007669"/>
    <property type="project" value="UniProtKB-UniRule"/>
</dbReference>
<dbReference type="GO" id="GO:0052170">
    <property type="term" value="P:symbiont-mediated suppression of host innate immune response"/>
    <property type="evidence" value="ECO:0007669"/>
    <property type="project" value="UniProtKB-KW"/>
</dbReference>
<dbReference type="GO" id="GO:0039502">
    <property type="term" value="P:symbiont-mediated suppression of host type I interferon-mediated signaling pathway"/>
    <property type="evidence" value="ECO:0007669"/>
    <property type="project" value="UniProtKB-UniRule"/>
</dbReference>
<dbReference type="Gene3D" id="3.30.160.330">
    <property type="match status" value="1"/>
</dbReference>
<dbReference type="HAMAP" id="MF_04004">
    <property type="entry name" value="PPV_E7"/>
    <property type="match status" value="1"/>
</dbReference>
<dbReference type="InterPro" id="IPR000148">
    <property type="entry name" value="Papilloma_E7"/>
</dbReference>
<dbReference type="Pfam" id="PF00527">
    <property type="entry name" value="E7"/>
    <property type="match status" value="1"/>
</dbReference>
<dbReference type="PIRSF" id="PIRSF003407">
    <property type="entry name" value="Papvi_E7"/>
    <property type="match status" value="1"/>
</dbReference>
<dbReference type="SUPFAM" id="SSF161234">
    <property type="entry name" value="E7 C-terminal domain-like"/>
    <property type="match status" value="1"/>
</dbReference>